<evidence type="ECO:0000250" key="1"/>
<evidence type="ECO:0000305" key="2"/>
<name>NNR_HYPBU</name>
<protein>
    <recommendedName>
        <fullName>Bifunctional NAD(P)H-hydrate repair enzyme Nnr</fullName>
    </recommendedName>
    <alternativeName>
        <fullName>Nicotinamide nucleotide repair protein</fullName>
    </alternativeName>
    <domain>
        <recommendedName>
            <fullName>ADP-dependent (S)-NAD(P)H-hydrate dehydratase</fullName>
            <ecNumber>4.2.1.136</ecNumber>
        </recommendedName>
        <alternativeName>
            <fullName>ADP-dependent NAD(P)HX dehydratase</fullName>
        </alternativeName>
    </domain>
    <domain>
        <recommendedName>
            <fullName>NAD(P)H-hydrate epimerase</fullName>
            <ecNumber>5.1.99.6</ecNumber>
        </recommendedName>
        <alternativeName>
            <fullName>NAD(P)HX epimerase</fullName>
        </alternativeName>
    </domain>
</protein>
<gene>
    <name type="primary">nnr</name>
    <name type="ordered locus">Hbut_0933</name>
</gene>
<reference key="1">
    <citation type="journal article" date="2007" name="Archaea">
        <title>The genome of Hyperthermus butylicus: a sulfur-reducing, peptide fermenting, neutrophilic Crenarchaeote growing up to 108 degrees C.</title>
        <authorList>
            <person name="Bruegger K."/>
            <person name="Chen L."/>
            <person name="Stark M."/>
            <person name="Zibat A."/>
            <person name="Redder P."/>
            <person name="Ruepp A."/>
            <person name="Awayez M."/>
            <person name="She Q."/>
            <person name="Garrett R.A."/>
            <person name="Klenk H.-P."/>
        </authorList>
    </citation>
    <scope>NUCLEOTIDE SEQUENCE [LARGE SCALE GENOMIC DNA]</scope>
    <source>
        <strain>DSM 5456 / JCM 9403 / PLM1-5</strain>
    </source>
</reference>
<organism>
    <name type="scientific">Hyperthermus butylicus (strain DSM 5456 / JCM 9403 / PLM1-5)</name>
    <dbReference type="NCBI Taxonomy" id="415426"/>
    <lineage>
        <taxon>Archaea</taxon>
        <taxon>Thermoproteota</taxon>
        <taxon>Thermoprotei</taxon>
        <taxon>Desulfurococcales</taxon>
        <taxon>Pyrodictiaceae</taxon>
        <taxon>Hyperthermus</taxon>
    </lineage>
</organism>
<comment type="function">
    <text evidence="1">Bifunctional enzyme that catalyzes the epimerization of the S- and R-forms of NAD(P)HX and the dehydration of the S-form of NAD(P)HX at the expense of ADP, which is converted to AMP. This allows the repair of both epimers of NAD(P)HX, a damaged form of NAD(P)H that is a result of enzymatic or heat-dependent hydration (By similarity).</text>
</comment>
<comment type="catalytic activity">
    <reaction>
        <text>(6S)-NADHX + ADP = AMP + phosphate + NADH + H(+)</text>
        <dbReference type="Rhea" id="RHEA:32223"/>
        <dbReference type="ChEBI" id="CHEBI:15378"/>
        <dbReference type="ChEBI" id="CHEBI:43474"/>
        <dbReference type="ChEBI" id="CHEBI:57945"/>
        <dbReference type="ChEBI" id="CHEBI:64074"/>
        <dbReference type="ChEBI" id="CHEBI:456215"/>
        <dbReference type="ChEBI" id="CHEBI:456216"/>
        <dbReference type="EC" id="4.2.1.136"/>
    </reaction>
</comment>
<comment type="catalytic activity">
    <reaction>
        <text>(6S)-NADPHX + ADP = AMP + phosphate + NADPH + H(+)</text>
        <dbReference type="Rhea" id="RHEA:32235"/>
        <dbReference type="ChEBI" id="CHEBI:15378"/>
        <dbReference type="ChEBI" id="CHEBI:43474"/>
        <dbReference type="ChEBI" id="CHEBI:57783"/>
        <dbReference type="ChEBI" id="CHEBI:64076"/>
        <dbReference type="ChEBI" id="CHEBI:456215"/>
        <dbReference type="ChEBI" id="CHEBI:456216"/>
        <dbReference type="EC" id="4.2.1.136"/>
    </reaction>
</comment>
<comment type="catalytic activity">
    <reaction>
        <text>(6R)-NADHX = (6S)-NADHX</text>
        <dbReference type="Rhea" id="RHEA:32215"/>
        <dbReference type="ChEBI" id="CHEBI:64074"/>
        <dbReference type="ChEBI" id="CHEBI:64075"/>
        <dbReference type="EC" id="5.1.99.6"/>
    </reaction>
</comment>
<comment type="catalytic activity">
    <reaction>
        <text>(6R)-NADPHX = (6S)-NADPHX</text>
        <dbReference type="Rhea" id="RHEA:32227"/>
        <dbReference type="ChEBI" id="CHEBI:64076"/>
        <dbReference type="ChEBI" id="CHEBI:64077"/>
        <dbReference type="EC" id="5.1.99.6"/>
    </reaction>
</comment>
<comment type="cofactor">
    <cofactor evidence="1">
        <name>K(+)</name>
        <dbReference type="ChEBI" id="CHEBI:29103"/>
    </cofactor>
    <text evidence="1">Binds 1 potassium ion per subunit.</text>
</comment>
<comment type="similarity">
    <text evidence="2">In the N-terminal section; belongs to the NnrE/AIBP family.</text>
</comment>
<comment type="similarity">
    <text evidence="2">In the C-terminal section; belongs to the NnrD/CARKD family.</text>
</comment>
<sequence>MLGRPVFGLGKAITSVDVAVIDANSEWIGVKRLQLMENAGRSVAEEAAKLAKPGSRVVVFAGPGGNGGDGLVAARHLAYMGYQVTVVMIVKPEEIRSPETRAMYEALAAMDLTVDIRIARAPADVAPVEADVVIDALLGTGLRGAPRPPYSDAIEAVNSSTGLKLAVDVPSGLNSDTGETPGAYVKADITVTFHKPKPGLLRRPDVAGRLVVVSIGAPPEAEVYVGPGDVAYRVRPRSWKAHKGSSGRVLIVGGSQDYVGAPILAALAAERSGVDLVFLAAPEHVTRAASHHPTIIPVPLRGSPNIHPDHVKKLEQLLDRVDAIAIGMGVGLSDETKEAIPQIIVKALEKEKPVVVDADGIKILGERGIPNSNRKLVVTPHQREFQILFGDALSGVDEDIKARALKAAEKAQRHGLVILLKGPIDIVTDGERIRLNRTGVPAMSVGGTGDTLAGITAALLARKLEPFHAASIAAFVNGLAGALAYAEKKDSMTAMDLIEKIPEALNNPIEAANRVPAYQRLVRGRIEWQPPVGRSES</sequence>
<keyword id="KW-0067">ATP-binding</keyword>
<keyword id="KW-0413">Isomerase</keyword>
<keyword id="KW-0456">Lyase</keyword>
<keyword id="KW-0479">Metal-binding</keyword>
<keyword id="KW-0511">Multifunctional enzyme</keyword>
<keyword id="KW-0520">NAD</keyword>
<keyword id="KW-0521">NADP</keyword>
<keyword id="KW-0547">Nucleotide-binding</keyword>
<keyword id="KW-0630">Potassium</keyword>
<keyword id="KW-1185">Reference proteome</keyword>
<proteinExistence type="inferred from homology"/>
<feature type="chain" id="PRO_0000416426" description="Bifunctional NAD(P)H-hydrate repair enzyme Nnr">
    <location>
        <begin position="1"/>
        <end position="537"/>
    </location>
</feature>
<feature type="domain" description="YjeF N-terminal">
    <location>
        <begin position="13"/>
        <end position="223"/>
    </location>
</feature>
<feature type="domain" description="YjeF C-terminal">
    <location>
        <begin position="226"/>
        <end position="508"/>
    </location>
</feature>
<feature type="region of interest" description="NAD(P)H-hydrate epimerase" evidence="1">
    <location>
        <begin position="1"/>
        <end position="227"/>
    </location>
</feature>
<feature type="region of interest" description="NADPHX 1; for epimerase activity" evidence="1">
    <location>
        <begin position="65"/>
        <end position="69"/>
    </location>
</feature>
<feature type="region of interest" description="NADPHX 1; for epimerase activity" evidence="1">
    <location>
        <begin position="139"/>
        <end position="145"/>
    </location>
</feature>
<feature type="region of interest" description="ADP-dependent (S)-NAD(P)H-hydrate dehydratase" evidence="1">
    <location>
        <begin position="227"/>
        <end position="537"/>
    </location>
</feature>
<feature type="region of interest" description="NADPHX 2; for dehydratase activity" evidence="1">
    <location>
        <begin position="381"/>
        <end position="387"/>
    </location>
</feature>
<feature type="binding site" evidence="1">
    <location>
        <position position="66"/>
    </location>
    <ligand>
        <name>K(+)</name>
        <dbReference type="ChEBI" id="CHEBI:29103"/>
    </ligand>
</feature>
<feature type="binding site" evidence="1">
    <location>
        <position position="135"/>
    </location>
    <ligand>
        <name>K(+)</name>
        <dbReference type="ChEBI" id="CHEBI:29103"/>
    </ligand>
</feature>
<feature type="binding site" evidence="1">
    <location>
        <position position="150"/>
    </location>
    <ligand>
        <name>(6S)-NADPHX</name>
        <dbReference type="ChEBI" id="CHEBI:64076"/>
        <label>1</label>
        <note>for epimerase activity</note>
    </ligand>
</feature>
<feature type="binding site" evidence="1">
    <location>
        <position position="168"/>
    </location>
    <ligand>
        <name>(6S)-NADPHX</name>
        <dbReference type="ChEBI" id="CHEBI:64076"/>
        <label>1</label>
        <note>for epimerase activity</note>
    </ligand>
</feature>
<feature type="binding site" evidence="1">
    <location>
        <position position="171"/>
    </location>
    <ligand>
        <name>K(+)</name>
        <dbReference type="ChEBI" id="CHEBI:29103"/>
    </ligand>
</feature>
<feature type="binding site" evidence="1">
    <location>
        <position position="329"/>
    </location>
    <ligand>
        <name>(6S)-NADPHX</name>
        <dbReference type="ChEBI" id="CHEBI:64076"/>
        <label>2</label>
        <note>for dehydratase activity</note>
    </ligand>
</feature>
<feature type="binding site" evidence="1">
    <location>
        <begin position="421"/>
        <end position="425"/>
    </location>
    <ligand>
        <name>ADP</name>
        <dbReference type="ChEBI" id="CHEBI:456216"/>
    </ligand>
</feature>
<feature type="binding site" evidence="1">
    <location>
        <begin position="440"/>
        <end position="449"/>
    </location>
    <ligand>
        <name>ADP</name>
        <dbReference type="ChEBI" id="CHEBI:456216"/>
    </ligand>
</feature>
<feature type="binding site" evidence="1">
    <location>
        <position position="450"/>
    </location>
    <ligand>
        <name>(6S)-NADPHX</name>
        <dbReference type="ChEBI" id="CHEBI:64076"/>
        <label>2</label>
        <note>for dehydratase activity</note>
    </ligand>
</feature>
<accession>A2BLC0</accession>
<dbReference type="EC" id="4.2.1.136"/>
<dbReference type="EC" id="5.1.99.6"/>
<dbReference type="EMBL" id="CP000493">
    <property type="protein sequence ID" value="ABM80781.1"/>
    <property type="molecule type" value="Genomic_DNA"/>
</dbReference>
<dbReference type="RefSeq" id="WP_011822099.1">
    <property type="nucleotide sequence ID" value="NC_008818.1"/>
</dbReference>
<dbReference type="SMR" id="A2BLC0"/>
<dbReference type="STRING" id="415426.Hbut_0933"/>
<dbReference type="EnsemblBacteria" id="ABM80781">
    <property type="protein sequence ID" value="ABM80781"/>
    <property type="gene ID" value="Hbut_0933"/>
</dbReference>
<dbReference type="GeneID" id="4782905"/>
<dbReference type="KEGG" id="hbu:Hbut_0933"/>
<dbReference type="eggNOG" id="arCOG00018">
    <property type="taxonomic scope" value="Archaea"/>
</dbReference>
<dbReference type="HOGENOM" id="CLU_024853_4_1_2"/>
<dbReference type="Proteomes" id="UP000002593">
    <property type="component" value="Chromosome"/>
</dbReference>
<dbReference type="GO" id="GO:0052855">
    <property type="term" value="F:ADP-dependent NAD(P)H-hydrate dehydratase activity"/>
    <property type="evidence" value="ECO:0007669"/>
    <property type="project" value="UniProtKB-UniRule"/>
</dbReference>
<dbReference type="GO" id="GO:0005524">
    <property type="term" value="F:ATP binding"/>
    <property type="evidence" value="ECO:0007669"/>
    <property type="project" value="UniProtKB-KW"/>
</dbReference>
<dbReference type="GO" id="GO:0046872">
    <property type="term" value="F:metal ion binding"/>
    <property type="evidence" value="ECO:0007669"/>
    <property type="project" value="UniProtKB-KW"/>
</dbReference>
<dbReference type="GO" id="GO:0052856">
    <property type="term" value="F:NAD(P)HX epimerase activity"/>
    <property type="evidence" value="ECO:0007669"/>
    <property type="project" value="UniProtKB-UniRule"/>
</dbReference>
<dbReference type="GO" id="GO:0110051">
    <property type="term" value="P:metabolite repair"/>
    <property type="evidence" value="ECO:0007669"/>
    <property type="project" value="TreeGrafter"/>
</dbReference>
<dbReference type="GO" id="GO:0046496">
    <property type="term" value="P:nicotinamide nucleotide metabolic process"/>
    <property type="evidence" value="ECO:0007669"/>
    <property type="project" value="UniProtKB-UniRule"/>
</dbReference>
<dbReference type="CDD" id="cd01171">
    <property type="entry name" value="YXKO-related"/>
    <property type="match status" value="1"/>
</dbReference>
<dbReference type="Gene3D" id="3.40.1190.20">
    <property type="match status" value="1"/>
</dbReference>
<dbReference type="Gene3D" id="3.40.50.10260">
    <property type="entry name" value="YjeF N-terminal domain"/>
    <property type="match status" value="1"/>
</dbReference>
<dbReference type="HAMAP" id="MF_01965">
    <property type="entry name" value="NADHX_dehydratase"/>
    <property type="match status" value="1"/>
</dbReference>
<dbReference type="HAMAP" id="MF_01966">
    <property type="entry name" value="NADHX_epimerase"/>
    <property type="match status" value="1"/>
</dbReference>
<dbReference type="InterPro" id="IPR000631">
    <property type="entry name" value="CARKD"/>
</dbReference>
<dbReference type="InterPro" id="IPR030677">
    <property type="entry name" value="Nnr"/>
</dbReference>
<dbReference type="InterPro" id="IPR029056">
    <property type="entry name" value="Ribokinase-like"/>
</dbReference>
<dbReference type="InterPro" id="IPR004443">
    <property type="entry name" value="YjeF_N_dom"/>
</dbReference>
<dbReference type="InterPro" id="IPR036652">
    <property type="entry name" value="YjeF_N_dom_sf"/>
</dbReference>
<dbReference type="NCBIfam" id="TIGR00196">
    <property type="entry name" value="yjeF_cterm"/>
    <property type="match status" value="1"/>
</dbReference>
<dbReference type="NCBIfam" id="TIGR00197">
    <property type="entry name" value="yjeF_nterm"/>
    <property type="match status" value="1"/>
</dbReference>
<dbReference type="PANTHER" id="PTHR12592:SF0">
    <property type="entry name" value="ATP-DEPENDENT (S)-NAD(P)H-HYDRATE DEHYDRATASE"/>
    <property type="match status" value="1"/>
</dbReference>
<dbReference type="PANTHER" id="PTHR12592">
    <property type="entry name" value="ATP-DEPENDENT (S)-NAD(P)H-HYDRATE DEHYDRATASE FAMILY MEMBER"/>
    <property type="match status" value="1"/>
</dbReference>
<dbReference type="Pfam" id="PF01256">
    <property type="entry name" value="Carb_kinase"/>
    <property type="match status" value="1"/>
</dbReference>
<dbReference type="Pfam" id="PF03853">
    <property type="entry name" value="YjeF_N"/>
    <property type="match status" value="1"/>
</dbReference>
<dbReference type="PIRSF" id="PIRSF017184">
    <property type="entry name" value="Nnr"/>
    <property type="match status" value="1"/>
</dbReference>
<dbReference type="SUPFAM" id="SSF53613">
    <property type="entry name" value="Ribokinase-like"/>
    <property type="match status" value="1"/>
</dbReference>
<dbReference type="SUPFAM" id="SSF64153">
    <property type="entry name" value="YjeF N-terminal domain-like"/>
    <property type="match status" value="1"/>
</dbReference>
<dbReference type="PROSITE" id="PS51383">
    <property type="entry name" value="YJEF_C_3"/>
    <property type="match status" value="1"/>
</dbReference>
<dbReference type="PROSITE" id="PS51385">
    <property type="entry name" value="YJEF_N"/>
    <property type="match status" value="1"/>
</dbReference>